<dbReference type="EC" id="3.4.11.18" evidence="1"/>
<dbReference type="EMBL" id="AJ248287">
    <property type="protein sequence ID" value="CAB50328.1"/>
    <property type="molecule type" value="Genomic_DNA"/>
</dbReference>
<dbReference type="EMBL" id="HE613800">
    <property type="protein sequence ID" value="CCE70868.1"/>
    <property type="molecule type" value="Genomic_DNA"/>
</dbReference>
<dbReference type="PIR" id="C75054">
    <property type="entry name" value="C75054"/>
</dbReference>
<dbReference type="RefSeq" id="WP_010868538.1">
    <property type="nucleotide sequence ID" value="NC_000868.1"/>
</dbReference>
<dbReference type="SMR" id="Q9UYT4"/>
<dbReference type="STRING" id="272844.PAB1434"/>
<dbReference type="MEROPS" id="M24.035"/>
<dbReference type="KEGG" id="pab:PAB1434"/>
<dbReference type="PATRIC" id="fig|272844.11.peg.1513"/>
<dbReference type="eggNOG" id="arCOG01001">
    <property type="taxonomic scope" value="Archaea"/>
</dbReference>
<dbReference type="HOGENOM" id="CLU_015857_7_0_2"/>
<dbReference type="OrthoDB" id="372008at2157"/>
<dbReference type="PhylomeDB" id="Q9UYT4"/>
<dbReference type="Proteomes" id="UP000000810">
    <property type="component" value="Chromosome"/>
</dbReference>
<dbReference type="Proteomes" id="UP000009139">
    <property type="component" value="Chromosome"/>
</dbReference>
<dbReference type="GO" id="GO:0005737">
    <property type="term" value="C:cytoplasm"/>
    <property type="evidence" value="ECO:0007669"/>
    <property type="project" value="TreeGrafter"/>
</dbReference>
<dbReference type="GO" id="GO:0004239">
    <property type="term" value="F:initiator methionyl aminopeptidase activity"/>
    <property type="evidence" value="ECO:0007669"/>
    <property type="project" value="UniProtKB-UniRule"/>
</dbReference>
<dbReference type="GO" id="GO:0046872">
    <property type="term" value="F:metal ion binding"/>
    <property type="evidence" value="ECO:0007669"/>
    <property type="project" value="UniProtKB-UniRule"/>
</dbReference>
<dbReference type="GO" id="GO:0070006">
    <property type="term" value="F:metalloaminopeptidase activity"/>
    <property type="evidence" value="ECO:0007669"/>
    <property type="project" value="UniProtKB-UniRule"/>
</dbReference>
<dbReference type="GO" id="GO:0006508">
    <property type="term" value="P:proteolysis"/>
    <property type="evidence" value="ECO:0007669"/>
    <property type="project" value="UniProtKB-KW"/>
</dbReference>
<dbReference type="CDD" id="cd01088">
    <property type="entry name" value="MetAP2"/>
    <property type="match status" value="1"/>
</dbReference>
<dbReference type="Gene3D" id="3.90.230.10">
    <property type="entry name" value="Creatinase/methionine aminopeptidase superfamily"/>
    <property type="match status" value="1"/>
</dbReference>
<dbReference type="Gene3D" id="1.10.10.10">
    <property type="entry name" value="Winged helix-like DNA-binding domain superfamily/Winged helix DNA-binding domain"/>
    <property type="match status" value="1"/>
</dbReference>
<dbReference type="HAMAP" id="MF_01975">
    <property type="entry name" value="MetAP_2_arc"/>
    <property type="match status" value="1"/>
</dbReference>
<dbReference type="InterPro" id="IPR036005">
    <property type="entry name" value="Creatinase/aminopeptidase-like"/>
</dbReference>
<dbReference type="InterPro" id="IPR050247">
    <property type="entry name" value="Met_Aminopeptidase_Type2"/>
</dbReference>
<dbReference type="InterPro" id="IPR028595">
    <property type="entry name" value="MetAP_archaeal"/>
</dbReference>
<dbReference type="InterPro" id="IPR000994">
    <property type="entry name" value="Pept_M24"/>
</dbReference>
<dbReference type="InterPro" id="IPR001714">
    <property type="entry name" value="Pept_M24_MAP"/>
</dbReference>
<dbReference type="InterPro" id="IPR002468">
    <property type="entry name" value="Pept_M24A_MAP2"/>
</dbReference>
<dbReference type="InterPro" id="IPR018349">
    <property type="entry name" value="Pept_M24A_MAP2_BS"/>
</dbReference>
<dbReference type="InterPro" id="IPR036388">
    <property type="entry name" value="WH-like_DNA-bd_sf"/>
</dbReference>
<dbReference type="InterPro" id="IPR036390">
    <property type="entry name" value="WH_DNA-bd_sf"/>
</dbReference>
<dbReference type="NCBIfam" id="TIGR00501">
    <property type="entry name" value="met_pdase_II"/>
    <property type="match status" value="1"/>
</dbReference>
<dbReference type="PANTHER" id="PTHR45777">
    <property type="entry name" value="METHIONINE AMINOPEPTIDASE 2"/>
    <property type="match status" value="1"/>
</dbReference>
<dbReference type="PANTHER" id="PTHR45777:SF2">
    <property type="entry name" value="METHIONINE AMINOPEPTIDASE 2"/>
    <property type="match status" value="1"/>
</dbReference>
<dbReference type="Pfam" id="PF00557">
    <property type="entry name" value="Peptidase_M24"/>
    <property type="match status" value="1"/>
</dbReference>
<dbReference type="PRINTS" id="PR00599">
    <property type="entry name" value="MAPEPTIDASE"/>
</dbReference>
<dbReference type="SUPFAM" id="SSF55920">
    <property type="entry name" value="Creatinase/aminopeptidase"/>
    <property type="match status" value="1"/>
</dbReference>
<dbReference type="SUPFAM" id="SSF46785">
    <property type="entry name" value="Winged helix' DNA-binding domain"/>
    <property type="match status" value="1"/>
</dbReference>
<dbReference type="PROSITE" id="PS01202">
    <property type="entry name" value="MAP_2"/>
    <property type="match status" value="1"/>
</dbReference>
<protein>
    <recommendedName>
        <fullName evidence="1">Methionine aminopeptidase</fullName>
        <shortName evidence="1">MAP</shortName>
        <shortName evidence="1">MetAP</shortName>
        <ecNumber evidence="1">3.4.11.18</ecNumber>
    </recommendedName>
    <alternativeName>
        <fullName evidence="1">Peptidase M</fullName>
    </alternativeName>
</protein>
<sequence length="295" mass="33027">MDVDKLIEAGKIAKKVREEAVKLAKPGVSLLELAEKIEGRIIELGAKPAFPVNLSLNEIAAHYTPYKGDETTLKEGDYLKIDIGVHIDGYIADTAVTVRVGMEEDDLMEAAREALESAISVARAGVEIKELGRAIEDEIRKRGFNPIVNLSGHKIERYKLHAGISIPNIYRPHDNYKLREGDVFAIEPFATTGAGQVIEVPPTLIYMYVRDAPVRMVQARFLLAKIKREYKTLPFAYRWLQGEMPEGQLKLALRTLEKSGALYGYPVLREIRNGLVTQFEHTIIVEKDSVIVTTE</sequence>
<comment type="function">
    <text evidence="1">Removes the N-terminal methionine from nascent proteins. The N-terminal methionine is often cleaved when the second residue in the primary sequence is small and uncharged (Met-Ala-, Cys, Gly, Pro, Ser, Thr, or Val).</text>
</comment>
<comment type="catalytic activity">
    <reaction evidence="1">
        <text>Release of N-terminal amino acids, preferentially methionine, from peptides and arylamides.</text>
        <dbReference type="EC" id="3.4.11.18"/>
    </reaction>
</comment>
<comment type="cofactor">
    <cofactor evidence="1">
        <name>Co(2+)</name>
        <dbReference type="ChEBI" id="CHEBI:48828"/>
    </cofactor>
    <cofactor evidence="1">
        <name>Zn(2+)</name>
        <dbReference type="ChEBI" id="CHEBI:29105"/>
    </cofactor>
    <cofactor evidence="1">
        <name>Mn(2+)</name>
        <dbReference type="ChEBI" id="CHEBI:29035"/>
    </cofactor>
    <cofactor evidence="1">
        <name>Fe(2+)</name>
        <dbReference type="ChEBI" id="CHEBI:29033"/>
    </cofactor>
    <text evidence="1">Binds 2 divalent metal cations per subunit. Has a high-affinity and a low affinity metal-binding site. The true nature of the physiological cofactor is under debate. The enzyme is active with cobalt, zinc, manganese or divalent iron ions. Most likely, methionine aminopeptidases function as mononuclear Fe(2+)-metalloproteases under physiological conditions, and the catalytically relevant metal-binding site has been assigned to the histidine-containing high-affinity site.</text>
</comment>
<comment type="subunit">
    <text evidence="1">Monomer.</text>
</comment>
<comment type="similarity">
    <text evidence="1">Belongs to the peptidase M24A family. Methionine aminopeptidase archaeal type 2 subfamily.</text>
</comment>
<keyword id="KW-0031">Aminopeptidase</keyword>
<keyword id="KW-0378">Hydrolase</keyword>
<keyword id="KW-0479">Metal-binding</keyword>
<keyword id="KW-0645">Protease</keyword>
<reference key="1">
    <citation type="journal article" date="2003" name="Mol. Microbiol.">
        <title>An integrated analysis of the genome of the hyperthermophilic archaeon Pyrococcus abyssi.</title>
        <authorList>
            <person name="Cohen G.N."/>
            <person name="Barbe V."/>
            <person name="Flament D."/>
            <person name="Galperin M."/>
            <person name="Heilig R."/>
            <person name="Lecompte O."/>
            <person name="Poch O."/>
            <person name="Prieur D."/>
            <person name="Querellou J."/>
            <person name="Ripp R."/>
            <person name="Thierry J.-C."/>
            <person name="Van der Oost J."/>
            <person name="Weissenbach J."/>
            <person name="Zivanovic Y."/>
            <person name="Forterre P."/>
        </authorList>
    </citation>
    <scope>NUCLEOTIDE SEQUENCE [LARGE SCALE GENOMIC DNA]</scope>
    <source>
        <strain>GE5 / Orsay</strain>
    </source>
</reference>
<reference key="2">
    <citation type="journal article" date="2012" name="Curr. Microbiol.">
        <title>Re-annotation of two hyperthermophilic archaea Pyrococcus abyssi GE5 and Pyrococcus furiosus DSM 3638.</title>
        <authorList>
            <person name="Gao J."/>
            <person name="Wang J."/>
        </authorList>
    </citation>
    <scope>GENOME REANNOTATION</scope>
    <source>
        <strain>GE5 / Orsay</strain>
    </source>
</reference>
<gene>
    <name evidence="1" type="primary">map</name>
    <name type="ordered locus">PYRAB14230</name>
    <name type="ORF">PAB1434</name>
</gene>
<organism>
    <name type="scientific">Pyrococcus abyssi (strain GE5 / Orsay)</name>
    <dbReference type="NCBI Taxonomy" id="272844"/>
    <lineage>
        <taxon>Archaea</taxon>
        <taxon>Methanobacteriati</taxon>
        <taxon>Methanobacteriota</taxon>
        <taxon>Thermococci</taxon>
        <taxon>Thermococcales</taxon>
        <taxon>Thermococcaceae</taxon>
        <taxon>Pyrococcus</taxon>
    </lineage>
</organism>
<proteinExistence type="inferred from homology"/>
<accession>Q9UYT4</accession>
<accession>G8ZHN1</accession>
<name>MAP2_PYRAB</name>
<feature type="chain" id="PRO_0000148977" description="Methionine aminopeptidase">
    <location>
        <begin position="1"/>
        <end position="295"/>
    </location>
</feature>
<feature type="binding site" evidence="1">
    <location>
        <position position="62"/>
    </location>
    <ligand>
        <name>substrate</name>
    </ligand>
</feature>
<feature type="binding site" evidence="1">
    <location>
        <position position="82"/>
    </location>
    <ligand>
        <name>a divalent metal cation</name>
        <dbReference type="ChEBI" id="CHEBI:60240"/>
        <label>1</label>
    </ligand>
</feature>
<feature type="binding site" evidence="1">
    <location>
        <position position="93"/>
    </location>
    <ligand>
        <name>a divalent metal cation</name>
        <dbReference type="ChEBI" id="CHEBI:60240"/>
        <label>1</label>
    </ligand>
</feature>
<feature type="binding site" evidence="1">
    <location>
        <position position="93"/>
    </location>
    <ligand>
        <name>a divalent metal cation</name>
        <dbReference type="ChEBI" id="CHEBI:60240"/>
        <label>2</label>
        <note>catalytic</note>
    </ligand>
</feature>
<feature type="binding site" evidence="1">
    <location>
        <position position="153"/>
    </location>
    <ligand>
        <name>a divalent metal cation</name>
        <dbReference type="ChEBI" id="CHEBI:60240"/>
        <label>2</label>
        <note>catalytic</note>
    </ligand>
</feature>
<feature type="binding site" evidence="1">
    <location>
        <position position="161"/>
    </location>
    <ligand>
        <name>substrate</name>
    </ligand>
</feature>
<feature type="binding site" evidence="1">
    <location>
        <position position="187"/>
    </location>
    <ligand>
        <name>a divalent metal cation</name>
        <dbReference type="ChEBI" id="CHEBI:60240"/>
        <label>2</label>
        <note>catalytic</note>
    </ligand>
</feature>
<feature type="binding site" evidence="1">
    <location>
        <position position="280"/>
    </location>
    <ligand>
        <name>a divalent metal cation</name>
        <dbReference type="ChEBI" id="CHEBI:60240"/>
        <label>1</label>
    </ligand>
</feature>
<feature type="binding site" evidence="1">
    <location>
        <position position="280"/>
    </location>
    <ligand>
        <name>a divalent metal cation</name>
        <dbReference type="ChEBI" id="CHEBI:60240"/>
        <label>2</label>
        <note>catalytic</note>
    </ligand>
</feature>
<evidence type="ECO:0000255" key="1">
    <source>
        <dbReference type="HAMAP-Rule" id="MF_01975"/>
    </source>
</evidence>